<protein>
    <recommendedName>
        <fullName evidence="1">tRNA dimethylallyltransferase</fullName>
        <ecNumber evidence="1">2.5.1.75</ecNumber>
    </recommendedName>
    <alternativeName>
        <fullName evidence="1">Dimethylallyl diphosphate:tRNA dimethylallyltransferase</fullName>
        <shortName evidence="1">DMAPP:tRNA dimethylallyltransferase</shortName>
        <shortName evidence="1">DMATase</shortName>
    </alternativeName>
    <alternativeName>
        <fullName evidence="1">Isopentenyl-diphosphate:tRNA isopentenyltransferase</fullName>
        <shortName evidence="1">IPP transferase</shortName>
        <shortName evidence="1">IPPT</shortName>
        <shortName evidence="1">IPTase</shortName>
    </alternativeName>
</protein>
<dbReference type="EC" id="2.5.1.75" evidence="1"/>
<dbReference type="EMBL" id="CP000946">
    <property type="protein sequence ID" value="ACA79446.1"/>
    <property type="molecule type" value="Genomic_DNA"/>
</dbReference>
<dbReference type="RefSeq" id="WP_001280345.1">
    <property type="nucleotide sequence ID" value="NZ_MTFT01000012.1"/>
</dbReference>
<dbReference type="SMR" id="B1IT35"/>
<dbReference type="GeneID" id="93777650"/>
<dbReference type="KEGG" id="ecl:EcolC_3842"/>
<dbReference type="HOGENOM" id="CLU_032616_0_0_6"/>
<dbReference type="GO" id="GO:0005524">
    <property type="term" value="F:ATP binding"/>
    <property type="evidence" value="ECO:0007669"/>
    <property type="project" value="UniProtKB-UniRule"/>
</dbReference>
<dbReference type="GO" id="GO:0052381">
    <property type="term" value="F:tRNA dimethylallyltransferase activity"/>
    <property type="evidence" value="ECO:0007669"/>
    <property type="project" value="UniProtKB-UniRule"/>
</dbReference>
<dbReference type="GO" id="GO:0006400">
    <property type="term" value="P:tRNA modification"/>
    <property type="evidence" value="ECO:0007669"/>
    <property type="project" value="TreeGrafter"/>
</dbReference>
<dbReference type="FunFam" id="1.10.20.140:FF:000001">
    <property type="entry name" value="tRNA dimethylallyltransferase"/>
    <property type="match status" value="1"/>
</dbReference>
<dbReference type="FunFam" id="1.10.287.890:FF:000001">
    <property type="entry name" value="tRNA dimethylallyltransferase"/>
    <property type="match status" value="1"/>
</dbReference>
<dbReference type="Gene3D" id="1.10.20.140">
    <property type="match status" value="1"/>
</dbReference>
<dbReference type="Gene3D" id="1.10.287.890">
    <property type="entry name" value="Crystal structure of tRNA isopentenylpyrophosphate transferase (bh2366) domain"/>
    <property type="match status" value="1"/>
</dbReference>
<dbReference type="Gene3D" id="3.40.50.300">
    <property type="entry name" value="P-loop containing nucleotide triphosphate hydrolases"/>
    <property type="match status" value="1"/>
</dbReference>
<dbReference type="HAMAP" id="MF_00185">
    <property type="entry name" value="IPP_trans"/>
    <property type="match status" value="1"/>
</dbReference>
<dbReference type="InterPro" id="IPR039657">
    <property type="entry name" value="Dimethylallyltransferase"/>
</dbReference>
<dbReference type="InterPro" id="IPR018022">
    <property type="entry name" value="IPT"/>
</dbReference>
<dbReference type="InterPro" id="IPR027417">
    <property type="entry name" value="P-loop_NTPase"/>
</dbReference>
<dbReference type="NCBIfam" id="TIGR00174">
    <property type="entry name" value="miaA"/>
    <property type="match status" value="1"/>
</dbReference>
<dbReference type="PANTHER" id="PTHR11088">
    <property type="entry name" value="TRNA DIMETHYLALLYLTRANSFERASE"/>
    <property type="match status" value="1"/>
</dbReference>
<dbReference type="PANTHER" id="PTHR11088:SF60">
    <property type="entry name" value="TRNA DIMETHYLALLYLTRANSFERASE"/>
    <property type="match status" value="1"/>
</dbReference>
<dbReference type="Pfam" id="PF01715">
    <property type="entry name" value="IPPT"/>
    <property type="match status" value="1"/>
</dbReference>
<dbReference type="SUPFAM" id="SSF52540">
    <property type="entry name" value="P-loop containing nucleoside triphosphate hydrolases"/>
    <property type="match status" value="1"/>
</dbReference>
<keyword id="KW-0067">ATP-binding</keyword>
<keyword id="KW-0460">Magnesium</keyword>
<keyword id="KW-0547">Nucleotide-binding</keyword>
<keyword id="KW-0808">Transferase</keyword>
<keyword id="KW-0819">tRNA processing</keyword>
<name>MIAA_ECOLC</name>
<gene>
    <name evidence="1" type="primary">miaA</name>
    <name type="ordered locus">EcolC_3842</name>
</gene>
<comment type="function">
    <text evidence="1">Catalyzes the transfer of a dimethylallyl group onto the adenine at position 37 in tRNAs that read codons beginning with uridine, leading to the formation of N6-(dimethylallyl)adenosine (i(6)A).</text>
</comment>
<comment type="catalytic activity">
    <reaction evidence="1">
        <text>adenosine(37) in tRNA + dimethylallyl diphosphate = N(6)-dimethylallyladenosine(37) in tRNA + diphosphate</text>
        <dbReference type="Rhea" id="RHEA:26482"/>
        <dbReference type="Rhea" id="RHEA-COMP:10162"/>
        <dbReference type="Rhea" id="RHEA-COMP:10375"/>
        <dbReference type="ChEBI" id="CHEBI:33019"/>
        <dbReference type="ChEBI" id="CHEBI:57623"/>
        <dbReference type="ChEBI" id="CHEBI:74411"/>
        <dbReference type="ChEBI" id="CHEBI:74415"/>
        <dbReference type="EC" id="2.5.1.75"/>
    </reaction>
</comment>
<comment type="cofactor">
    <cofactor evidence="1">
        <name>Mg(2+)</name>
        <dbReference type="ChEBI" id="CHEBI:18420"/>
    </cofactor>
</comment>
<comment type="subunit">
    <text evidence="1">Monomer.</text>
</comment>
<comment type="similarity">
    <text evidence="1">Belongs to the IPP transferase family.</text>
</comment>
<reference key="1">
    <citation type="submission" date="2008-02" db="EMBL/GenBank/DDBJ databases">
        <title>Complete sequence of Escherichia coli C str. ATCC 8739.</title>
        <authorList>
            <person name="Copeland A."/>
            <person name="Lucas S."/>
            <person name="Lapidus A."/>
            <person name="Glavina del Rio T."/>
            <person name="Dalin E."/>
            <person name="Tice H."/>
            <person name="Bruce D."/>
            <person name="Goodwin L."/>
            <person name="Pitluck S."/>
            <person name="Kiss H."/>
            <person name="Brettin T."/>
            <person name="Detter J.C."/>
            <person name="Han C."/>
            <person name="Kuske C.R."/>
            <person name="Schmutz J."/>
            <person name="Larimer F."/>
            <person name="Land M."/>
            <person name="Hauser L."/>
            <person name="Kyrpides N."/>
            <person name="Mikhailova N."/>
            <person name="Ingram L."/>
            <person name="Richardson P."/>
        </authorList>
    </citation>
    <scope>NUCLEOTIDE SEQUENCE [LARGE SCALE GENOMIC DNA]</scope>
    <source>
        <strain>ATCC 8739 / DSM 1576 / NBRC 3972 / NCIMB 8545 / WDCM 00012 / Crooks</strain>
    </source>
</reference>
<proteinExistence type="inferred from homology"/>
<feature type="chain" id="PRO_1000077395" description="tRNA dimethylallyltransferase">
    <location>
        <begin position="1"/>
        <end position="316"/>
    </location>
</feature>
<feature type="region of interest" description="Interaction with substrate tRNA" evidence="1">
    <location>
        <begin position="42"/>
        <end position="45"/>
    </location>
</feature>
<feature type="region of interest" description="Interaction with substrate tRNA" evidence="1">
    <location>
        <begin position="166"/>
        <end position="170"/>
    </location>
</feature>
<feature type="region of interest" description="Interaction with substrate tRNA" evidence="1">
    <location>
        <begin position="247"/>
        <end position="252"/>
    </location>
</feature>
<feature type="region of interest" description="Interaction with substrate tRNA" evidence="1">
    <location>
        <begin position="280"/>
        <end position="287"/>
    </location>
</feature>
<feature type="binding site" evidence="1">
    <location>
        <begin position="17"/>
        <end position="24"/>
    </location>
    <ligand>
        <name>ATP</name>
        <dbReference type="ChEBI" id="CHEBI:30616"/>
    </ligand>
</feature>
<feature type="binding site" evidence="1">
    <location>
        <begin position="19"/>
        <end position="24"/>
    </location>
    <ligand>
        <name>substrate</name>
    </ligand>
</feature>
<feature type="site" description="Interaction with substrate tRNA" evidence="1">
    <location>
        <position position="108"/>
    </location>
</feature>
<feature type="site" description="Interaction with substrate tRNA" evidence="1">
    <location>
        <position position="130"/>
    </location>
</feature>
<evidence type="ECO:0000255" key="1">
    <source>
        <dbReference type="HAMAP-Rule" id="MF_00185"/>
    </source>
</evidence>
<accession>B1IT35</accession>
<organism>
    <name type="scientific">Escherichia coli (strain ATCC 8739 / DSM 1576 / NBRC 3972 / NCIMB 8545 / WDCM 00012 / Crooks)</name>
    <dbReference type="NCBI Taxonomy" id="481805"/>
    <lineage>
        <taxon>Bacteria</taxon>
        <taxon>Pseudomonadati</taxon>
        <taxon>Pseudomonadota</taxon>
        <taxon>Gammaproteobacteria</taxon>
        <taxon>Enterobacterales</taxon>
        <taxon>Enterobacteriaceae</taxon>
        <taxon>Escherichia</taxon>
    </lineage>
</organism>
<sequence>MSDISKASLPKAIFLMGPTASGKTALAIELRKILPVELISVDSALIYKGMDIGTAKPNAEELLAAPHRLLDIRDPSQAYSAADFRRDALAEMADITAAGRIPLLVGGTMLYFKALLEGLSPLPSADPEVRARIEQQAAEQGWESLHRQLQEVDPVAAARIHPNDPQRLSRALEVFFISGKTLTELTQTSGDALPYQVHQFAIAPASRELLHQRIEQRFHQMLASGFEAEVRALFARGDLHTDLPSIRCVGYRQMWSYLEGEISYDEMVYRGVCATRQLAKRQITWLRGWEGVHWLDSEKPEQARDEVLQVVGAIAG</sequence>